<feature type="chain" id="PRO_1000125304" description="Cytidylate kinase">
    <location>
        <begin position="1"/>
        <end position="223"/>
    </location>
</feature>
<feature type="binding site" evidence="1">
    <location>
        <begin position="10"/>
        <end position="18"/>
    </location>
    <ligand>
        <name>ATP</name>
        <dbReference type="ChEBI" id="CHEBI:30616"/>
    </ligand>
</feature>
<reference key="1">
    <citation type="journal article" date="2010" name="Genome Biol.">
        <title>Structure and dynamics of the pan-genome of Streptococcus pneumoniae and closely related species.</title>
        <authorList>
            <person name="Donati C."/>
            <person name="Hiller N.L."/>
            <person name="Tettelin H."/>
            <person name="Muzzi A."/>
            <person name="Croucher N.J."/>
            <person name="Angiuoli S.V."/>
            <person name="Oggioni M."/>
            <person name="Dunning Hotopp J.C."/>
            <person name="Hu F.Z."/>
            <person name="Riley D.R."/>
            <person name="Covacci A."/>
            <person name="Mitchell T.J."/>
            <person name="Bentley S.D."/>
            <person name="Kilian M."/>
            <person name="Ehrlich G.D."/>
            <person name="Rappuoli R."/>
            <person name="Moxon E.R."/>
            <person name="Masignani V."/>
        </authorList>
    </citation>
    <scope>NUCLEOTIDE SEQUENCE [LARGE SCALE GENOMIC DNA]</scope>
    <source>
        <strain>JJA</strain>
    </source>
</reference>
<name>KCY_STRZJ</name>
<keyword id="KW-0067">ATP-binding</keyword>
<keyword id="KW-0963">Cytoplasm</keyword>
<keyword id="KW-0418">Kinase</keyword>
<keyword id="KW-0547">Nucleotide-binding</keyword>
<keyword id="KW-0808">Transferase</keyword>
<protein>
    <recommendedName>
        <fullName evidence="1">Cytidylate kinase</fullName>
        <shortName evidence="1">CK</shortName>
        <ecNumber evidence="1">2.7.4.25</ecNumber>
    </recommendedName>
    <alternativeName>
        <fullName evidence="1">Cytidine monophosphate kinase</fullName>
        <shortName evidence="1">CMP kinase</shortName>
    </alternativeName>
</protein>
<proteinExistence type="inferred from homology"/>
<dbReference type="EC" id="2.7.4.25" evidence="1"/>
<dbReference type="EMBL" id="CP000919">
    <property type="protein sequence ID" value="ACO19472.1"/>
    <property type="molecule type" value="Genomic_DNA"/>
</dbReference>
<dbReference type="RefSeq" id="WP_000849378.1">
    <property type="nucleotide sequence ID" value="NC_012466.1"/>
</dbReference>
<dbReference type="SMR" id="C1CFI5"/>
<dbReference type="GeneID" id="45653168"/>
<dbReference type="KEGG" id="sjj:SPJ_1509"/>
<dbReference type="HOGENOM" id="CLU_079959_0_2_9"/>
<dbReference type="Proteomes" id="UP000002206">
    <property type="component" value="Chromosome"/>
</dbReference>
<dbReference type="GO" id="GO:0005829">
    <property type="term" value="C:cytosol"/>
    <property type="evidence" value="ECO:0007669"/>
    <property type="project" value="TreeGrafter"/>
</dbReference>
<dbReference type="GO" id="GO:0005524">
    <property type="term" value="F:ATP binding"/>
    <property type="evidence" value="ECO:0007669"/>
    <property type="project" value="UniProtKB-UniRule"/>
</dbReference>
<dbReference type="GO" id="GO:0036430">
    <property type="term" value="F:CMP kinase activity"/>
    <property type="evidence" value="ECO:0007669"/>
    <property type="project" value="RHEA"/>
</dbReference>
<dbReference type="GO" id="GO:0036431">
    <property type="term" value="F:dCMP kinase activity"/>
    <property type="evidence" value="ECO:0007669"/>
    <property type="project" value="RHEA"/>
</dbReference>
<dbReference type="GO" id="GO:0015949">
    <property type="term" value="P:nucleobase-containing small molecule interconversion"/>
    <property type="evidence" value="ECO:0007669"/>
    <property type="project" value="TreeGrafter"/>
</dbReference>
<dbReference type="GO" id="GO:0006220">
    <property type="term" value="P:pyrimidine nucleotide metabolic process"/>
    <property type="evidence" value="ECO:0007669"/>
    <property type="project" value="UniProtKB-UniRule"/>
</dbReference>
<dbReference type="CDD" id="cd02020">
    <property type="entry name" value="CMPK"/>
    <property type="match status" value="1"/>
</dbReference>
<dbReference type="FunFam" id="3.40.50.300:FF:000484">
    <property type="entry name" value="Cytidylate kinase"/>
    <property type="match status" value="1"/>
</dbReference>
<dbReference type="Gene3D" id="3.40.50.300">
    <property type="entry name" value="P-loop containing nucleotide triphosphate hydrolases"/>
    <property type="match status" value="1"/>
</dbReference>
<dbReference type="HAMAP" id="MF_00238">
    <property type="entry name" value="Cytidyl_kinase_type1"/>
    <property type="match status" value="1"/>
</dbReference>
<dbReference type="InterPro" id="IPR003136">
    <property type="entry name" value="Cytidylate_kin"/>
</dbReference>
<dbReference type="InterPro" id="IPR011994">
    <property type="entry name" value="Cytidylate_kinase_dom"/>
</dbReference>
<dbReference type="InterPro" id="IPR027417">
    <property type="entry name" value="P-loop_NTPase"/>
</dbReference>
<dbReference type="NCBIfam" id="TIGR00017">
    <property type="entry name" value="cmk"/>
    <property type="match status" value="1"/>
</dbReference>
<dbReference type="PANTHER" id="PTHR21299:SF2">
    <property type="entry name" value="CYTIDYLATE KINASE"/>
    <property type="match status" value="1"/>
</dbReference>
<dbReference type="PANTHER" id="PTHR21299">
    <property type="entry name" value="CYTIDYLATE KINASE/PANTOATE-BETA-ALANINE LIGASE"/>
    <property type="match status" value="1"/>
</dbReference>
<dbReference type="Pfam" id="PF02224">
    <property type="entry name" value="Cytidylate_kin"/>
    <property type="match status" value="1"/>
</dbReference>
<dbReference type="SUPFAM" id="SSF52540">
    <property type="entry name" value="P-loop containing nucleoside triphosphate hydrolases"/>
    <property type="match status" value="1"/>
</dbReference>
<organism>
    <name type="scientific">Streptococcus pneumoniae (strain JJA)</name>
    <dbReference type="NCBI Taxonomy" id="488222"/>
    <lineage>
        <taxon>Bacteria</taxon>
        <taxon>Bacillati</taxon>
        <taxon>Bacillota</taxon>
        <taxon>Bacilli</taxon>
        <taxon>Lactobacillales</taxon>
        <taxon>Streptococcaceae</taxon>
        <taxon>Streptococcus</taxon>
    </lineage>
</organism>
<comment type="catalytic activity">
    <reaction evidence="1">
        <text>CMP + ATP = CDP + ADP</text>
        <dbReference type="Rhea" id="RHEA:11600"/>
        <dbReference type="ChEBI" id="CHEBI:30616"/>
        <dbReference type="ChEBI" id="CHEBI:58069"/>
        <dbReference type="ChEBI" id="CHEBI:60377"/>
        <dbReference type="ChEBI" id="CHEBI:456216"/>
        <dbReference type="EC" id="2.7.4.25"/>
    </reaction>
</comment>
<comment type="catalytic activity">
    <reaction evidence="1">
        <text>dCMP + ATP = dCDP + ADP</text>
        <dbReference type="Rhea" id="RHEA:25094"/>
        <dbReference type="ChEBI" id="CHEBI:30616"/>
        <dbReference type="ChEBI" id="CHEBI:57566"/>
        <dbReference type="ChEBI" id="CHEBI:58593"/>
        <dbReference type="ChEBI" id="CHEBI:456216"/>
        <dbReference type="EC" id="2.7.4.25"/>
    </reaction>
</comment>
<comment type="subcellular location">
    <subcellularLocation>
        <location evidence="1">Cytoplasm</location>
    </subcellularLocation>
</comment>
<comment type="similarity">
    <text evidence="1">Belongs to the cytidylate kinase family. Type 1 subfamily.</text>
</comment>
<evidence type="ECO:0000255" key="1">
    <source>
        <dbReference type="HAMAP-Rule" id="MF_00238"/>
    </source>
</evidence>
<sequence>MKTIQIAIDGPASSGKSTVAKIIAKDFGFTYLDTGAMYRAATYMALKNQLGVEEVEALLALLDQHPISFGRSETGDQLVFVGDVDITHPIRENEVTNHVSAIAAIPEVREKLVSLQQEIAQQGGIVMDGRDIGTVVLPQAELKIFLVASVDERAERRYKENIAKGIETDLETLKKEIAARDYKDSHRETSPLKQAEDAVYLDTTGLNIQEVVEKIKAEAEKRM</sequence>
<gene>
    <name evidence="1" type="primary">cmk</name>
    <name type="ordered locus">SPJ_1509</name>
</gene>
<accession>C1CFI5</accession>